<accession>B4TWF5</accession>
<name>RL27_SALSV</name>
<sequence length="85" mass="9125">MAHKKAGGSTRNGRDSEAKRLGVKRFGGEAVLAGSIIVRQRGTKFHAGTNVGCGRDHTLFAKADGKVKFEVKGPKNRKYISIVAE</sequence>
<gene>
    <name evidence="1" type="primary">rpmA</name>
    <name type="ordered locus">SeSA_A3495</name>
</gene>
<reference key="1">
    <citation type="journal article" date="2011" name="J. Bacteriol.">
        <title>Comparative genomics of 28 Salmonella enterica isolates: evidence for CRISPR-mediated adaptive sublineage evolution.</title>
        <authorList>
            <person name="Fricke W.F."/>
            <person name="Mammel M.K."/>
            <person name="McDermott P.F."/>
            <person name="Tartera C."/>
            <person name="White D.G."/>
            <person name="Leclerc J.E."/>
            <person name="Ravel J."/>
            <person name="Cebula T.A."/>
        </authorList>
    </citation>
    <scope>NUCLEOTIDE SEQUENCE [LARGE SCALE GENOMIC DNA]</scope>
    <source>
        <strain>CVM19633</strain>
    </source>
</reference>
<dbReference type="EMBL" id="CP001127">
    <property type="protein sequence ID" value="ACF89464.1"/>
    <property type="molecule type" value="Genomic_DNA"/>
</dbReference>
<dbReference type="RefSeq" id="WP_000940593.1">
    <property type="nucleotide sequence ID" value="NC_011094.1"/>
</dbReference>
<dbReference type="SMR" id="B4TWF5"/>
<dbReference type="GeneID" id="66757642"/>
<dbReference type="KEGG" id="sew:SeSA_A3495"/>
<dbReference type="HOGENOM" id="CLU_095424_4_1_6"/>
<dbReference type="Proteomes" id="UP000001865">
    <property type="component" value="Chromosome"/>
</dbReference>
<dbReference type="GO" id="GO:0022625">
    <property type="term" value="C:cytosolic large ribosomal subunit"/>
    <property type="evidence" value="ECO:0007669"/>
    <property type="project" value="TreeGrafter"/>
</dbReference>
<dbReference type="GO" id="GO:0003735">
    <property type="term" value="F:structural constituent of ribosome"/>
    <property type="evidence" value="ECO:0007669"/>
    <property type="project" value="InterPro"/>
</dbReference>
<dbReference type="GO" id="GO:0006412">
    <property type="term" value="P:translation"/>
    <property type="evidence" value="ECO:0007669"/>
    <property type="project" value="UniProtKB-UniRule"/>
</dbReference>
<dbReference type="FunFam" id="2.40.50.100:FF:000001">
    <property type="entry name" value="50S ribosomal protein L27"/>
    <property type="match status" value="1"/>
</dbReference>
<dbReference type="Gene3D" id="2.40.50.100">
    <property type="match status" value="1"/>
</dbReference>
<dbReference type="HAMAP" id="MF_00539">
    <property type="entry name" value="Ribosomal_bL27"/>
    <property type="match status" value="1"/>
</dbReference>
<dbReference type="InterPro" id="IPR001684">
    <property type="entry name" value="Ribosomal_bL27"/>
</dbReference>
<dbReference type="InterPro" id="IPR018261">
    <property type="entry name" value="Ribosomal_bL27_CS"/>
</dbReference>
<dbReference type="NCBIfam" id="TIGR00062">
    <property type="entry name" value="L27"/>
    <property type="match status" value="1"/>
</dbReference>
<dbReference type="PANTHER" id="PTHR15893:SF0">
    <property type="entry name" value="LARGE RIBOSOMAL SUBUNIT PROTEIN BL27M"/>
    <property type="match status" value="1"/>
</dbReference>
<dbReference type="PANTHER" id="PTHR15893">
    <property type="entry name" value="RIBOSOMAL PROTEIN L27"/>
    <property type="match status" value="1"/>
</dbReference>
<dbReference type="Pfam" id="PF01016">
    <property type="entry name" value="Ribosomal_L27"/>
    <property type="match status" value="1"/>
</dbReference>
<dbReference type="PRINTS" id="PR00063">
    <property type="entry name" value="RIBOSOMALL27"/>
</dbReference>
<dbReference type="SUPFAM" id="SSF110324">
    <property type="entry name" value="Ribosomal L27 protein-like"/>
    <property type="match status" value="1"/>
</dbReference>
<dbReference type="PROSITE" id="PS00831">
    <property type="entry name" value="RIBOSOMAL_L27"/>
    <property type="match status" value="1"/>
</dbReference>
<organism>
    <name type="scientific">Salmonella schwarzengrund (strain CVM19633)</name>
    <dbReference type="NCBI Taxonomy" id="439843"/>
    <lineage>
        <taxon>Bacteria</taxon>
        <taxon>Pseudomonadati</taxon>
        <taxon>Pseudomonadota</taxon>
        <taxon>Gammaproteobacteria</taxon>
        <taxon>Enterobacterales</taxon>
        <taxon>Enterobacteriaceae</taxon>
        <taxon>Salmonella</taxon>
    </lineage>
</organism>
<proteinExistence type="inferred from homology"/>
<keyword id="KW-0687">Ribonucleoprotein</keyword>
<keyword id="KW-0689">Ribosomal protein</keyword>
<evidence type="ECO:0000255" key="1">
    <source>
        <dbReference type="HAMAP-Rule" id="MF_00539"/>
    </source>
</evidence>
<evidence type="ECO:0000256" key="2">
    <source>
        <dbReference type="SAM" id="MobiDB-lite"/>
    </source>
</evidence>
<evidence type="ECO:0000305" key="3"/>
<comment type="similarity">
    <text evidence="1">Belongs to the bacterial ribosomal protein bL27 family.</text>
</comment>
<feature type="chain" id="PRO_1000128807" description="Large ribosomal subunit protein bL27">
    <location>
        <begin position="1"/>
        <end position="85"/>
    </location>
</feature>
<feature type="region of interest" description="Disordered" evidence="2">
    <location>
        <begin position="1"/>
        <end position="20"/>
    </location>
</feature>
<protein>
    <recommendedName>
        <fullName evidence="1">Large ribosomal subunit protein bL27</fullName>
    </recommendedName>
    <alternativeName>
        <fullName evidence="3">50S ribosomal protein L27</fullName>
    </alternativeName>
</protein>